<sequence length="294" mass="32086">MPWLQVRLAITPEQAETYEDALLEVGAVSVTFMDAEDQPIFEPDLGTTPLWSRTHLLALFEADTDETALLAHLALLTGGELPEHHIEEIADQDWERSWMDNFQPMRFGRRLWIVPSWHAAPEPDAVNLLLDPGLAFGTGTHPTTALCLEWLDGQELAGRQVLDFGCGSGILAIAALLLGAERAVGTDIDPQALEASRDNASRNGIEPARFPVYLPADLPRQQADVLVANILAGPLVSLAPQLTGLVRPGGLLALSGILAEQAEEVREAYSAHFDLDPTAEREGWLRISGRRRAD</sequence>
<organism>
    <name type="scientific">Pseudomonas paraeruginosa (strain DSM 24068 / PA7)</name>
    <name type="common">Pseudomonas aeruginosa (strain PA7)</name>
    <dbReference type="NCBI Taxonomy" id="381754"/>
    <lineage>
        <taxon>Bacteria</taxon>
        <taxon>Pseudomonadati</taxon>
        <taxon>Pseudomonadota</taxon>
        <taxon>Gammaproteobacteria</taxon>
        <taxon>Pseudomonadales</taxon>
        <taxon>Pseudomonadaceae</taxon>
        <taxon>Pseudomonas</taxon>
        <taxon>Pseudomonas paraeruginosa</taxon>
    </lineage>
</organism>
<feature type="chain" id="PRO_1000046064" description="Ribosomal protein L11 methyltransferase">
    <location>
        <begin position="1"/>
        <end position="294"/>
    </location>
</feature>
<feature type="binding site" evidence="1">
    <location>
        <position position="144"/>
    </location>
    <ligand>
        <name>S-adenosyl-L-methionine</name>
        <dbReference type="ChEBI" id="CHEBI:59789"/>
    </ligand>
</feature>
<feature type="binding site" evidence="1">
    <location>
        <position position="165"/>
    </location>
    <ligand>
        <name>S-adenosyl-L-methionine</name>
        <dbReference type="ChEBI" id="CHEBI:59789"/>
    </ligand>
</feature>
<feature type="binding site" evidence="1">
    <location>
        <position position="187"/>
    </location>
    <ligand>
        <name>S-adenosyl-L-methionine</name>
        <dbReference type="ChEBI" id="CHEBI:59789"/>
    </ligand>
</feature>
<feature type="binding site" evidence="1">
    <location>
        <position position="229"/>
    </location>
    <ligand>
        <name>S-adenosyl-L-methionine</name>
        <dbReference type="ChEBI" id="CHEBI:59789"/>
    </ligand>
</feature>
<protein>
    <recommendedName>
        <fullName evidence="1">Ribosomal protein L11 methyltransferase</fullName>
        <shortName evidence="1">L11 Mtase</shortName>
        <ecNumber evidence="1">2.1.1.-</ecNumber>
    </recommendedName>
</protein>
<keyword id="KW-0963">Cytoplasm</keyword>
<keyword id="KW-0489">Methyltransferase</keyword>
<keyword id="KW-0949">S-adenosyl-L-methionine</keyword>
<keyword id="KW-0808">Transferase</keyword>
<gene>
    <name evidence="1" type="primary">prmA</name>
    <name type="ordered locus">PSPA7_5570</name>
</gene>
<accession>A6VCV6</accession>
<evidence type="ECO:0000255" key="1">
    <source>
        <dbReference type="HAMAP-Rule" id="MF_00735"/>
    </source>
</evidence>
<proteinExistence type="inferred from homology"/>
<dbReference type="EC" id="2.1.1.-" evidence="1"/>
<dbReference type="EMBL" id="CP000744">
    <property type="protein sequence ID" value="ABR82009.1"/>
    <property type="molecule type" value="Genomic_DNA"/>
</dbReference>
<dbReference type="RefSeq" id="WP_012077561.1">
    <property type="nucleotide sequence ID" value="NC_009656.1"/>
</dbReference>
<dbReference type="SMR" id="A6VCV6"/>
<dbReference type="KEGG" id="pap:PSPA7_5570"/>
<dbReference type="HOGENOM" id="CLU_049382_4_1_6"/>
<dbReference type="Proteomes" id="UP000001582">
    <property type="component" value="Chromosome"/>
</dbReference>
<dbReference type="GO" id="GO:0005829">
    <property type="term" value="C:cytosol"/>
    <property type="evidence" value="ECO:0007669"/>
    <property type="project" value="TreeGrafter"/>
</dbReference>
<dbReference type="GO" id="GO:0016279">
    <property type="term" value="F:protein-lysine N-methyltransferase activity"/>
    <property type="evidence" value="ECO:0007669"/>
    <property type="project" value="TreeGrafter"/>
</dbReference>
<dbReference type="GO" id="GO:0032259">
    <property type="term" value="P:methylation"/>
    <property type="evidence" value="ECO:0007669"/>
    <property type="project" value="UniProtKB-KW"/>
</dbReference>
<dbReference type="CDD" id="cd02440">
    <property type="entry name" value="AdoMet_MTases"/>
    <property type="match status" value="1"/>
</dbReference>
<dbReference type="Gene3D" id="3.40.50.150">
    <property type="entry name" value="Vaccinia Virus protein VP39"/>
    <property type="match status" value="1"/>
</dbReference>
<dbReference type="HAMAP" id="MF_00735">
    <property type="entry name" value="Methyltr_PrmA"/>
    <property type="match status" value="1"/>
</dbReference>
<dbReference type="InterPro" id="IPR050078">
    <property type="entry name" value="Ribosomal_L11_MeTrfase_PrmA"/>
</dbReference>
<dbReference type="InterPro" id="IPR004498">
    <property type="entry name" value="Ribosomal_PrmA_MeTrfase"/>
</dbReference>
<dbReference type="InterPro" id="IPR029063">
    <property type="entry name" value="SAM-dependent_MTases_sf"/>
</dbReference>
<dbReference type="NCBIfam" id="TIGR00406">
    <property type="entry name" value="prmA"/>
    <property type="match status" value="1"/>
</dbReference>
<dbReference type="PANTHER" id="PTHR43648">
    <property type="entry name" value="ELECTRON TRANSFER FLAVOPROTEIN BETA SUBUNIT LYSINE METHYLTRANSFERASE"/>
    <property type="match status" value="1"/>
</dbReference>
<dbReference type="PANTHER" id="PTHR43648:SF1">
    <property type="entry name" value="ELECTRON TRANSFER FLAVOPROTEIN BETA SUBUNIT LYSINE METHYLTRANSFERASE"/>
    <property type="match status" value="1"/>
</dbReference>
<dbReference type="Pfam" id="PF06325">
    <property type="entry name" value="PrmA"/>
    <property type="match status" value="1"/>
</dbReference>
<dbReference type="PIRSF" id="PIRSF000401">
    <property type="entry name" value="RPL11_MTase"/>
    <property type="match status" value="1"/>
</dbReference>
<dbReference type="SUPFAM" id="SSF53335">
    <property type="entry name" value="S-adenosyl-L-methionine-dependent methyltransferases"/>
    <property type="match status" value="1"/>
</dbReference>
<comment type="function">
    <text evidence="1">Methylates ribosomal protein L11.</text>
</comment>
<comment type="catalytic activity">
    <reaction evidence="1">
        <text>L-lysyl-[protein] + 3 S-adenosyl-L-methionine = N(6),N(6),N(6)-trimethyl-L-lysyl-[protein] + 3 S-adenosyl-L-homocysteine + 3 H(+)</text>
        <dbReference type="Rhea" id="RHEA:54192"/>
        <dbReference type="Rhea" id="RHEA-COMP:9752"/>
        <dbReference type="Rhea" id="RHEA-COMP:13826"/>
        <dbReference type="ChEBI" id="CHEBI:15378"/>
        <dbReference type="ChEBI" id="CHEBI:29969"/>
        <dbReference type="ChEBI" id="CHEBI:57856"/>
        <dbReference type="ChEBI" id="CHEBI:59789"/>
        <dbReference type="ChEBI" id="CHEBI:61961"/>
    </reaction>
</comment>
<comment type="subcellular location">
    <subcellularLocation>
        <location evidence="1">Cytoplasm</location>
    </subcellularLocation>
</comment>
<comment type="similarity">
    <text evidence="1">Belongs to the methyltransferase superfamily. PrmA family.</text>
</comment>
<reference key="1">
    <citation type="submission" date="2007-06" db="EMBL/GenBank/DDBJ databases">
        <authorList>
            <person name="Dodson R.J."/>
            <person name="Harkins D."/>
            <person name="Paulsen I.T."/>
        </authorList>
    </citation>
    <scope>NUCLEOTIDE SEQUENCE [LARGE SCALE GENOMIC DNA]</scope>
    <source>
        <strain>DSM 24068 / PA7</strain>
    </source>
</reference>
<name>PRMA_PSEP7</name>